<keyword id="KW-0472">Membrane</keyword>
<keyword id="KW-0496">Mitochondrion</keyword>
<keyword id="KW-0999">Mitochondrion inner membrane</keyword>
<keyword id="KW-1185">Reference proteome</keyword>
<keyword id="KW-0812">Transmembrane</keyword>
<keyword id="KW-1133">Transmembrane helix</keyword>
<feature type="chain" id="PRO_0000405440" description="Cytochrome c oxidase assembly factor 3, mitochondrial">
    <location>
        <begin position="1"/>
        <end position="90"/>
    </location>
</feature>
<feature type="topological domain" description="Mitochondrial matrix" evidence="1">
    <location>
        <begin position="1"/>
        <end position="31"/>
    </location>
</feature>
<feature type="transmembrane region" description="Helical" evidence="2">
    <location>
        <begin position="32"/>
        <end position="54"/>
    </location>
</feature>
<feature type="topological domain" description="Mitochondrial intermembrane" evidence="1">
    <location>
        <begin position="55"/>
        <end position="90"/>
    </location>
</feature>
<sequence length="90" mass="10185">MAVLGKPKGHNRYRDPRTFEMTPALLRVRAPFFARNMIGLALATSIPLGVYLYTVDMLSKDEFSDIPIPPIADDELAKLKKEYEDKKNSS</sequence>
<comment type="function">
    <text evidence="1">Required for assembly of cytochrome c oxidase (complex IV).</text>
</comment>
<comment type="subunit">
    <text evidence="1">Component of 250-400 kDa complexes called cytochrome oxidase assembly intermediates or COA complexes.</text>
</comment>
<comment type="subcellular location">
    <subcellularLocation>
        <location>Mitochondrion inner membrane</location>
        <topology>Single-pass membrane protein</topology>
    </subcellularLocation>
</comment>
<comment type="similarity">
    <text evidence="3">Belongs to the COA3 family.</text>
</comment>
<evidence type="ECO:0000250" key="1"/>
<evidence type="ECO:0000255" key="2"/>
<evidence type="ECO:0000305" key="3"/>
<accession>Q6BL60</accession>
<dbReference type="EMBL" id="CR382138">
    <property type="protein sequence ID" value="CAG89437.1"/>
    <property type="molecule type" value="Genomic_DNA"/>
</dbReference>
<dbReference type="RefSeq" id="XP_461061.1">
    <property type="nucleotide sequence ID" value="XM_461061.1"/>
</dbReference>
<dbReference type="SMR" id="Q6BL60"/>
<dbReference type="FunCoup" id="Q6BL60">
    <property type="interactions" value="35"/>
</dbReference>
<dbReference type="STRING" id="284592.Q6BL60"/>
<dbReference type="GeneID" id="2904018"/>
<dbReference type="KEGG" id="dha:DEHA2F16148g"/>
<dbReference type="eggNOG" id="ENOG502S440">
    <property type="taxonomic scope" value="Eukaryota"/>
</dbReference>
<dbReference type="HOGENOM" id="CLU_153999_0_0_1"/>
<dbReference type="InParanoid" id="Q6BL60"/>
<dbReference type="OMA" id="WKMTPAM"/>
<dbReference type="OrthoDB" id="10018333at2759"/>
<dbReference type="Proteomes" id="UP000000599">
    <property type="component" value="Chromosome F"/>
</dbReference>
<dbReference type="GO" id="GO:0005743">
    <property type="term" value="C:mitochondrial inner membrane"/>
    <property type="evidence" value="ECO:0007669"/>
    <property type="project" value="UniProtKB-SubCell"/>
</dbReference>
<dbReference type="GO" id="GO:0033617">
    <property type="term" value="P:mitochondrial cytochrome c oxidase assembly"/>
    <property type="evidence" value="ECO:0007669"/>
    <property type="project" value="InterPro"/>
</dbReference>
<dbReference type="InterPro" id="IPR041752">
    <property type="entry name" value="Coa3"/>
</dbReference>
<dbReference type="PANTHER" id="PTHR15642:SF3">
    <property type="entry name" value="CYTOCHROME C OXIDASE ASSEMBLY FACTOR 3 HOMOLOG, MITOCHONDRIAL"/>
    <property type="match status" value="1"/>
</dbReference>
<dbReference type="PANTHER" id="PTHR15642">
    <property type="entry name" value="CYTOCHROME C OXIDASE ASSEMBLY FACTOR 3, MITOCHONDRIAL"/>
    <property type="match status" value="1"/>
</dbReference>
<reference key="1">
    <citation type="journal article" date="2004" name="Nature">
        <title>Genome evolution in yeasts.</title>
        <authorList>
            <person name="Dujon B."/>
            <person name="Sherman D."/>
            <person name="Fischer G."/>
            <person name="Durrens P."/>
            <person name="Casaregola S."/>
            <person name="Lafontaine I."/>
            <person name="de Montigny J."/>
            <person name="Marck C."/>
            <person name="Neuveglise C."/>
            <person name="Talla E."/>
            <person name="Goffard N."/>
            <person name="Frangeul L."/>
            <person name="Aigle M."/>
            <person name="Anthouard V."/>
            <person name="Babour A."/>
            <person name="Barbe V."/>
            <person name="Barnay S."/>
            <person name="Blanchin S."/>
            <person name="Beckerich J.-M."/>
            <person name="Beyne E."/>
            <person name="Bleykasten C."/>
            <person name="Boisrame A."/>
            <person name="Boyer J."/>
            <person name="Cattolico L."/>
            <person name="Confanioleri F."/>
            <person name="de Daruvar A."/>
            <person name="Despons L."/>
            <person name="Fabre E."/>
            <person name="Fairhead C."/>
            <person name="Ferry-Dumazet H."/>
            <person name="Groppi A."/>
            <person name="Hantraye F."/>
            <person name="Hennequin C."/>
            <person name="Jauniaux N."/>
            <person name="Joyet P."/>
            <person name="Kachouri R."/>
            <person name="Kerrest A."/>
            <person name="Koszul R."/>
            <person name="Lemaire M."/>
            <person name="Lesur I."/>
            <person name="Ma L."/>
            <person name="Muller H."/>
            <person name="Nicaud J.-M."/>
            <person name="Nikolski M."/>
            <person name="Oztas S."/>
            <person name="Ozier-Kalogeropoulos O."/>
            <person name="Pellenz S."/>
            <person name="Potier S."/>
            <person name="Richard G.-F."/>
            <person name="Straub M.-L."/>
            <person name="Suleau A."/>
            <person name="Swennen D."/>
            <person name="Tekaia F."/>
            <person name="Wesolowski-Louvel M."/>
            <person name="Westhof E."/>
            <person name="Wirth B."/>
            <person name="Zeniou-Meyer M."/>
            <person name="Zivanovic Y."/>
            <person name="Bolotin-Fukuhara M."/>
            <person name="Thierry A."/>
            <person name="Bouchier C."/>
            <person name="Caudron B."/>
            <person name="Scarpelli C."/>
            <person name="Gaillardin C."/>
            <person name="Weissenbach J."/>
            <person name="Wincker P."/>
            <person name="Souciet J.-L."/>
        </authorList>
    </citation>
    <scope>NUCLEOTIDE SEQUENCE [LARGE SCALE GENOMIC DNA]</scope>
    <source>
        <strain>ATCC 36239 / CBS 767 / BCRC 21394 / JCM 1990 / NBRC 0083 / IGC 2968</strain>
    </source>
</reference>
<proteinExistence type="inferred from homology"/>
<protein>
    <recommendedName>
        <fullName>Cytochrome c oxidase assembly factor 3, mitochondrial</fullName>
    </recommendedName>
</protein>
<name>COA3_DEBHA</name>
<organism>
    <name type="scientific">Debaryomyces hansenii (strain ATCC 36239 / CBS 767 / BCRC 21394 / JCM 1990 / NBRC 0083 / IGC 2968)</name>
    <name type="common">Yeast</name>
    <name type="synonym">Torulaspora hansenii</name>
    <dbReference type="NCBI Taxonomy" id="284592"/>
    <lineage>
        <taxon>Eukaryota</taxon>
        <taxon>Fungi</taxon>
        <taxon>Dikarya</taxon>
        <taxon>Ascomycota</taxon>
        <taxon>Saccharomycotina</taxon>
        <taxon>Pichiomycetes</taxon>
        <taxon>Debaryomycetaceae</taxon>
        <taxon>Debaryomyces</taxon>
    </lineage>
</organism>
<gene>
    <name type="primary">COA3</name>
    <name type="ordered locus">DEHA2F16148g</name>
</gene>